<gene>
    <name evidence="1" type="primary">rlmN</name>
    <name type="ordered locus">BF1078</name>
</gene>
<evidence type="ECO:0000255" key="1">
    <source>
        <dbReference type="HAMAP-Rule" id="MF_01849"/>
    </source>
</evidence>
<evidence type="ECO:0000255" key="2">
    <source>
        <dbReference type="PROSITE-ProRule" id="PRU01266"/>
    </source>
</evidence>
<name>RLMN_BACFR</name>
<reference key="1">
    <citation type="journal article" date="2004" name="Proc. Natl. Acad. Sci. U.S.A.">
        <title>Genomic analysis of Bacteroides fragilis reveals extensive DNA inversions regulating cell surface adaptation.</title>
        <authorList>
            <person name="Kuwahara T."/>
            <person name="Yamashita A."/>
            <person name="Hirakawa H."/>
            <person name="Nakayama H."/>
            <person name="Toh H."/>
            <person name="Okada N."/>
            <person name="Kuhara S."/>
            <person name="Hattori M."/>
            <person name="Hayashi T."/>
            <person name="Ohnishi Y."/>
        </authorList>
    </citation>
    <scope>NUCLEOTIDE SEQUENCE [LARGE SCALE GENOMIC DNA]</scope>
    <source>
        <strain>YCH46</strain>
    </source>
</reference>
<keyword id="KW-0004">4Fe-4S</keyword>
<keyword id="KW-0963">Cytoplasm</keyword>
<keyword id="KW-1015">Disulfide bond</keyword>
<keyword id="KW-0408">Iron</keyword>
<keyword id="KW-0411">Iron-sulfur</keyword>
<keyword id="KW-0479">Metal-binding</keyword>
<keyword id="KW-0489">Methyltransferase</keyword>
<keyword id="KW-0698">rRNA processing</keyword>
<keyword id="KW-0949">S-adenosyl-L-methionine</keyword>
<keyword id="KW-0808">Transferase</keyword>
<keyword id="KW-0819">tRNA processing</keyword>
<accession>Q64XE8</accession>
<feature type="chain" id="PRO_0000350040" description="Probable dual-specificity RNA methyltransferase RlmN">
    <location>
        <begin position="1"/>
        <end position="344"/>
    </location>
</feature>
<feature type="domain" description="Radical SAM core" evidence="2">
    <location>
        <begin position="98"/>
        <end position="325"/>
    </location>
</feature>
<feature type="active site" description="Proton acceptor" evidence="1">
    <location>
        <position position="92"/>
    </location>
</feature>
<feature type="active site" description="S-methylcysteine intermediate" evidence="1">
    <location>
        <position position="330"/>
    </location>
</feature>
<feature type="binding site" evidence="1">
    <location>
        <position position="112"/>
    </location>
    <ligand>
        <name>[4Fe-4S] cluster</name>
        <dbReference type="ChEBI" id="CHEBI:49883"/>
        <note>4Fe-4S-S-AdoMet</note>
    </ligand>
</feature>
<feature type="binding site" evidence="1">
    <location>
        <position position="116"/>
    </location>
    <ligand>
        <name>[4Fe-4S] cluster</name>
        <dbReference type="ChEBI" id="CHEBI:49883"/>
        <note>4Fe-4S-S-AdoMet</note>
    </ligand>
</feature>
<feature type="binding site" evidence="1">
    <location>
        <position position="119"/>
    </location>
    <ligand>
        <name>[4Fe-4S] cluster</name>
        <dbReference type="ChEBI" id="CHEBI:49883"/>
        <note>4Fe-4S-S-AdoMet</note>
    </ligand>
</feature>
<feature type="binding site" evidence="1">
    <location>
        <begin position="157"/>
        <end position="158"/>
    </location>
    <ligand>
        <name>S-adenosyl-L-methionine</name>
        <dbReference type="ChEBI" id="CHEBI:59789"/>
    </ligand>
</feature>
<feature type="binding site" evidence="1">
    <location>
        <position position="189"/>
    </location>
    <ligand>
        <name>S-adenosyl-L-methionine</name>
        <dbReference type="ChEBI" id="CHEBI:59789"/>
    </ligand>
</feature>
<feature type="binding site" evidence="1">
    <location>
        <begin position="211"/>
        <end position="213"/>
    </location>
    <ligand>
        <name>S-adenosyl-L-methionine</name>
        <dbReference type="ChEBI" id="CHEBI:59789"/>
    </ligand>
</feature>
<feature type="binding site" evidence="1">
    <location>
        <position position="287"/>
    </location>
    <ligand>
        <name>S-adenosyl-L-methionine</name>
        <dbReference type="ChEBI" id="CHEBI:59789"/>
    </ligand>
</feature>
<feature type="disulfide bond" description="(transient)" evidence="1">
    <location>
        <begin position="105"/>
        <end position="330"/>
    </location>
</feature>
<proteinExistence type="inferred from homology"/>
<comment type="function">
    <text evidence="1">Specifically methylates position 2 of adenine 2503 in 23S rRNA and position 2 of adenine 37 in tRNAs.</text>
</comment>
<comment type="catalytic activity">
    <reaction evidence="1">
        <text>adenosine(2503) in 23S rRNA + 2 reduced [2Fe-2S]-[ferredoxin] + 2 S-adenosyl-L-methionine = 2-methyladenosine(2503) in 23S rRNA + 5'-deoxyadenosine + L-methionine + 2 oxidized [2Fe-2S]-[ferredoxin] + S-adenosyl-L-homocysteine</text>
        <dbReference type="Rhea" id="RHEA:42916"/>
        <dbReference type="Rhea" id="RHEA-COMP:10000"/>
        <dbReference type="Rhea" id="RHEA-COMP:10001"/>
        <dbReference type="Rhea" id="RHEA-COMP:10152"/>
        <dbReference type="Rhea" id="RHEA-COMP:10282"/>
        <dbReference type="ChEBI" id="CHEBI:17319"/>
        <dbReference type="ChEBI" id="CHEBI:33737"/>
        <dbReference type="ChEBI" id="CHEBI:33738"/>
        <dbReference type="ChEBI" id="CHEBI:57844"/>
        <dbReference type="ChEBI" id="CHEBI:57856"/>
        <dbReference type="ChEBI" id="CHEBI:59789"/>
        <dbReference type="ChEBI" id="CHEBI:74411"/>
        <dbReference type="ChEBI" id="CHEBI:74497"/>
        <dbReference type="EC" id="2.1.1.192"/>
    </reaction>
</comment>
<comment type="catalytic activity">
    <reaction evidence="1">
        <text>adenosine(37) in tRNA + 2 reduced [2Fe-2S]-[ferredoxin] + 2 S-adenosyl-L-methionine = 2-methyladenosine(37) in tRNA + 5'-deoxyadenosine + L-methionine + 2 oxidized [2Fe-2S]-[ferredoxin] + S-adenosyl-L-homocysteine</text>
        <dbReference type="Rhea" id="RHEA:43332"/>
        <dbReference type="Rhea" id="RHEA-COMP:10000"/>
        <dbReference type="Rhea" id="RHEA-COMP:10001"/>
        <dbReference type="Rhea" id="RHEA-COMP:10162"/>
        <dbReference type="Rhea" id="RHEA-COMP:10485"/>
        <dbReference type="ChEBI" id="CHEBI:17319"/>
        <dbReference type="ChEBI" id="CHEBI:33737"/>
        <dbReference type="ChEBI" id="CHEBI:33738"/>
        <dbReference type="ChEBI" id="CHEBI:57844"/>
        <dbReference type="ChEBI" id="CHEBI:57856"/>
        <dbReference type="ChEBI" id="CHEBI:59789"/>
        <dbReference type="ChEBI" id="CHEBI:74411"/>
        <dbReference type="ChEBI" id="CHEBI:74497"/>
        <dbReference type="EC" id="2.1.1.192"/>
    </reaction>
</comment>
<comment type="cofactor">
    <cofactor evidence="1">
        <name>[4Fe-4S] cluster</name>
        <dbReference type="ChEBI" id="CHEBI:49883"/>
    </cofactor>
    <text evidence="1">Binds 1 [4Fe-4S] cluster. The cluster is coordinated with 3 cysteines and an exchangeable S-adenosyl-L-methionine.</text>
</comment>
<comment type="subcellular location">
    <subcellularLocation>
        <location evidence="1">Cytoplasm</location>
    </subcellularLocation>
</comment>
<comment type="miscellaneous">
    <text evidence="1">Reaction proceeds by a ping-pong mechanism involving intermediate methylation of a conserved cysteine residue.</text>
</comment>
<comment type="similarity">
    <text evidence="1">Belongs to the radical SAM superfamily. RlmN family.</text>
</comment>
<sequence>MPKYPLLGMTLTELQSVTKDLGMPAFAAKQIASWLYDKKVTSIDEMTNLSLKHRELLKGEYDLGISAPVDEMRSVDGTVKYLYQVSDNHFVEAVYIPDEDRATLCVSSQVGCKMNCKFCMTGKQGFTASLTANQILNQIAALPEWDKLTNVVMMGMGEPLDNLDEVLKALHILTASYGYGWSPKRITLSSVGLRKGLQRFIEESECHLAISLHSPFPSQRSELMPAERAFSIKEMVDLLKNYDFSKQRRLSFEYIVFKGVNDSLIYAKELLKLLRGLDCRVNLIRFHAIPGVDLEGAGMETMTSFRDYLTSHGLFTTIRASRGEDIFAACGMLSTAKQEESNKN</sequence>
<protein>
    <recommendedName>
        <fullName evidence="1">Probable dual-specificity RNA methyltransferase RlmN</fullName>
        <ecNumber evidence="1">2.1.1.192</ecNumber>
    </recommendedName>
    <alternativeName>
        <fullName evidence="1">23S rRNA (adenine(2503)-C(2))-methyltransferase</fullName>
    </alternativeName>
    <alternativeName>
        <fullName evidence="1">23S rRNA m2A2503 methyltransferase</fullName>
    </alternativeName>
    <alternativeName>
        <fullName evidence="1">Ribosomal RNA large subunit methyltransferase N</fullName>
    </alternativeName>
    <alternativeName>
        <fullName evidence="1">tRNA (adenine(37)-C(2))-methyltransferase</fullName>
    </alternativeName>
    <alternativeName>
        <fullName evidence="1">tRNA m2A37 methyltransferase</fullName>
    </alternativeName>
</protein>
<organism>
    <name type="scientific">Bacteroides fragilis (strain YCH46)</name>
    <dbReference type="NCBI Taxonomy" id="295405"/>
    <lineage>
        <taxon>Bacteria</taxon>
        <taxon>Pseudomonadati</taxon>
        <taxon>Bacteroidota</taxon>
        <taxon>Bacteroidia</taxon>
        <taxon>Bacteroidales</taxon>
        <taxon>Bacteroidaceae</taxon>
        <taxon>Bacteroides</taxon>
    </lineage>
</organism>
<dbReference type="EC" id="2.1.1.192" evidence="1"/>
<dbReference type="EMBL" id="AP006841">
    <property type="protein sequence ID" value="BAD47828.1"/>
    <property type="molecule type" value="Genomic_DNA"/>
</dbReference>
<dbReference type="RefSeq" id="WP_011202252.1">
    <property type="nucleotide sequence ID" value="NC_006347.1"/>
</dbReference>
<dbReference type="RefSeq" id="YP_098362.1">
    <property type="nucleotide sequence ID" value="NC_006347.1"/>
</dbReference>
<dbReference type="SMR" id="Q64XE8"/>
<dbReference type="STRING" id="295405.BF1078"/>
<dbReference type="KEGG" id="bfr:BF1078"/>
<dbReference type="PATRIC" id="fig|295405.11.peg.1068"/>
<dbReference type="HOGENOM" id="CLU_029101_0_0_10"/>
<dbReference type="OrthoDB" id="9793973at2"/>
<dbReference type="Proteomes" id="UP000002197">
    <property type="component" value="Chromosome"/>
</dbReference>
<dbReference type="GO" id="GO:0005737">
    <property type="term" value="C:cytoplasm"/>
    <property type="evidence" value="ECO:0007669"/>
    <property type="project" value="UniProtKB-SubCell"/>
</dbReference>
<dbReference type="GO" id="GO:0051539">
    <property type="term" value="F:4 iron, 4 sulfur cluster binding"/>
    <property type="evidence" value="ECO:0007669"/>
    <property type="project" value="UniProtKB-UniRule"/>
</dbReference>
<dbReference type="GO" id="GO:0046872">
    <property type="term" value="F:metal ion binding"/>
    <property type="evidence" value="ECO:0007669"/>
    <property type="project" value="UniProtKB-KW"/>
</dbReference>
<dbReference type="GO" id="GO:0070040">
    <property type="term" value="F:rRNA (adenine(2503)-C2-)-methyltransferase activity"/>
    <property type="evidence" value="ECO:0007669"/>
    <property type="project" value="UniProtKB-UniRule"/>
</dbReference>
<dbReference type="GO" id="GO:0019843">
    <property type="term" value="F:rRNA binding"/>
    <property type="evidence" value="ECO:0007669"/>
    <property type="project" value="UniProtKB-UniRule"/>
</dbReference>
<dbReference type="GO" id="GO:0002935">
    <property type="term" value="F:tRNA (adenine(37)-C2)-methyltransferase activity"/>
    <property type="evidence" value="ECO:0007669"/>
    <property type="project" value="UniProtKB-UniRule"/>
</dbReference>
<dbReference type="GO" id="GO:0000049">
    <property type="term" value="F:tRNA binding"/>
    <property type="evidence" value="ECO:0007669"/>
    <property type="project" value="UniProtKB-UniRule"/>
</dbReference>
<dbReference type="GO" id="GO:0070475">
    <property type="term" value="P:rRNA base methylation"/>
    <property type="evidence" value="ECO:0007669"/>
    <property type="project" value="UniProtKB-UniRule"/>
</dbReference>
<dbReference type="GO" id="GO:0030488">
    <property type="term" value="P:tRNA methylation"/>
    <property type="evidence" value="ECO:0007669"/>
    <property type="project" value="UniProtKB-UniRule"/>
</dbReference>
<dbReference type="CDD" id="cd01335">
    <property type="entry name" value="Radical_SAM"/>
    <property type="match status" value="1"/>
</dbReference>
<dbReference type="FunFam" id="1.10.150.530:FF:000006">
    <property type="entry name" value="Probable dual-specificity RNA methyltransferase RlmN"/>
    <property type="match status" value="1"/>
</dbReference>
<dbReference type="FunFam" id="3.20.20.70:FF:000014">
    <property type="entry name" value="Probable dual-specificity RNA methyltransferase RlmN"/>
    <property type="match status" value="1"/>
</dbReference>
<dbReference type="Gene3D" id="1.10.150.530">
    <property type="match status" value="1"/>
</dbReference>
<dbReference type="Gene3D" id="3.20.20.70">
    <property type="entry name" value="Aldolase class I"/>
    <property type="match status" value="1"/>
</dbReference>
<dbReference type="HAMAP" id="MF_01849">
    <property type="entry name" value="RNA_methyltr_RlmN"/>
    <property type="match status" value="1"/>
</dbReference>
<dbReference type="InterPro" id="IPR013785">
    <property type="entry name" value="Aldolase_TIM"/>
</dbReference>
<dbReference type="InterPro" id="IPR040072">
    <property type="entry name" value="Methyltransferase_A"/>
</dbReference>
<dbReference type="InterPro" id="IPR048641">
    <property type="entry name" value="RlmN_N"/>
</dbReference>
<dbReference type="InterPro" id="IPR027492">
    <property type="entry name" value="RNA_MTrfase_RlmN"/>
</dbReference>
<dbReference type="InterPro" id="IPR004383">
    <property type="entry name" value="rRNA_lsu_MTrfase_RlmN/Cfr"/>
</dbReference>
<dbReference type="InterPro" id="IPR007197">
    <property type="entry name" value="rSAM"/>
</dbReference>
<dbReference type="NCBIfam" id="TIGR00048">
    <property type="entry name" value="rRNA_mod_RlmN"/>
    <property type="match status" value="1"/>
</dbReference>
<dbReference type="PANTHER" id="PTHR30544">
    <property type="entry name" value="23S RRNA METHYLTRANSFERASE"/>
    <property type="match status" value="1"/>
</dbReference>
<dbReference type="PANTHER" id="PTHR30544:SF5">
    <property type="entry name" value="RADICAL SAM CORE DOMAIN-CONTAINING PROTEIN"/>
    <property type="match status" value="1"/>
</dbReference>
<dbReference type="Pfam" id="PF04055">
    <property type="entry name" value="Radical_SAM"/>
    <property type="match status" value="1"/>
</dbReference>
<dbReference type="Pfam" id="PF21016">
    <property type="entry name" value="RlmN_N"/>
    <property type="match status" value="1"/>
</dbReference>
<dbReference type="PIRSF" id="PIRSF006004">
    <property type="entry name" value="CHP00048"/>
    <property type="match status" value="1"/>
</dbReference>
<dbReference type="SFLD" id="SFLDF00275">
    <property type="entry name" value="adenosine_C2_methyltransferase"/>
    <property type="match status" value="1"/>
</dbReference>
<dbReference type="SFLD" id="SFLDG01062">
    <property type="entry name" value="methyltransferase_(Class_A)"/>
    <property type="match status" value="1"/>
</dbReference>
<dbReference type="SUPFAM" id="SSF102114">
    <property type="entry name" value="Radical SAM enzymes"/>
    <property type="match status" value="1"/>
</dbReference>
<dbReference type="PROSITE" id="PS51918">
    <property type="entry name" value="RADICAL_SAM"/>
    <property type="match status" value="1"/>
</dbReference>